<protein>
    <recommendedName>
        <fullName evidence="2">Transaldolase</fullName>
        <ecNumber evidence="2">2.2.1.2</ecNumber>
    </recommendedName>
</protein>
<feature type="chain" id="PRO_1000014534" description="Transaldolase">
    <location>
        <begin position="1"/>
        <end position="317"/>
    </location>
</feature>
<feature type="active site" description="Schiff-base intermediate with substrate" evidence="2">
    <location>
        <position position="132"/>
    </location>
</feature>
<dbReference type="EC" id="2.2.1.2" evidence="2"/>
<dbReference type="EMBL" id="AM286415">
    <property type="protein sequence ID" value="CAL10718.1"/>
    <property type="molecule type" value="Genomic_DNA"/>
</dbReference>
<dbReference type="RefSeq" id="WP_005157047.1">
    <property type="nucleotide sequence ID" value="NC_008800.1"/>
</dbReference>
<dbReference type="RefSeq" id="YP_001004958.1">
    <property type="nucleotide sequence ID" value="NC_008800.1"/>
</dbReference>
<dbReference type="SMR" id="A1JJD0"/>
<dbReference type="GeneID" id="31411767"/>
<dbReference type="KEGG" id="yen:YE0604"/>
<dbReference type="PATRIC" id="fig|393305.7.peg.698"/>
<dbReference type="eggNOG" id="COG0176">
    <property type="taxonomic scope" value="Bacteria"/>
</dbReference>
<dbReference type="HOGENOM" id="CLU_047470_0_1_6"/>
<dbReference type="OrthoDB" id="9809101at2"/>
<dbReference type="UniPathway" id="UPA00115">
    <property type="reaction ID" value="UER00414"/>
</dbReference>
<dbReference type="Proteomes" id="UP000000642">
    <property type="component" value="Chromosome"/>
</dbReference>
<dbReference type="GO" id="GO:0005829">
    <property type="term" value="C:cytosol"/>
    <property type="evidence" value="ECO:0007669"/>
    <property type="project" value="TreeGrafter"/>
</dbReference>
<dbReference type="GO" id="GO:0004801">
    <property type="term" value="F:transaldolase activity"/>
    <property type="evidence" value="ECO:0000250"/>
    <property type="project" value="UniProtKB"/>
</dbReference>
<dbReference type="GO" id="GO:0005975">
    <property type="term" value="P:carbohydrate metabolic process"/>
    <property type="evidence" value="ECO:0007669"/>
    <property type="project" value="InterPro"/>
</dbReference>
<dbReference type="GO" id="GO:0006098">
    <property type="term" value="P:pentose-phosphate shunt"/>
    <property type="evidence" value="ECO:0007669"/>
    <property type="project" value="UniProtKB-UniRule"/>
</dbReference>
<dbReference type="CDD" id="cd00957">
    <property type="entry name" value="Transaldolase_TalAB"/>
    <property type="match status" value="1"/>
</dbReference>
<dbReference type="FunFam" id="3.20.20.70:FF:000002">
    <property type="entry name" value="Transaldolase"/>
    <property type="match status" value="1"/>
</dbReference>
<dbReference type="Gene3D" id="3.20.20.70">
    <property type="entry name" value="Aldolase class I"/>
    <property type="match status" value="1"/>
</dbReference>
<dbReference type="HAMAP" id="MF_00492">
    <property type="entry name" value="Transaldolase_1"/>
    <property type="match status" value="1"/>
</dbReference>
<dbReference type="InterPro" id="IPR013785">
    <property type="entry name" value="Aldolase_TIM"/>
</dbReference>
<dbReference type="InterPro" id="IPR001585">
    <property type="entry name" value="TAL/FSA"/>
</dbReference>
<dbReference type="InterPro" id="IPR004730">
    <property type="entry name" value="Transaldolase_1"/>
</dbReference>
<dbReference type="InterPro" id="IPR018225">
    <property type="entry name" value="Transaldolase_AS"/>
</dbReference>
<dbReference type="NCBIfam" id="NF009001">
    <property type="entry name" value="PRK12346.1"/>
    <property type="match status" value="1"/>
</dbReference>
<dbReference type="NCBIfam" id="TIGR00874">
    <property type="entry name" value="talAB"/>
    <property type="match status" value="1"/>
</dbReference>
<dbReference type="PANTHER" id="PTHR10683">
    <property type="entry name" value="TRANSALDOLASE"/>
    <property type="match status" value="1"/>
</dbReference>
<dbReference type="PANTHER" id="PTHR10683:SF18">
    <property type="entry name" value="TRANSALDOLASE"/>
    <property type="match status" value="1"/>
</dbReference>
<dbReference type="Pfam" id="PF00923">
    <property type="entry name" value="TAL_FSA"/>
    <property type="match status" value="1"/>
</dbReference>
<dbReference type="SUPFAM" id="SSF51569">
    <property type="entry name" value="Aldolase"/>
    <property type="match status" value="1"/>
</dbReference>
<dbReference type="PROSITE" id="PS01054">
    <property type="entry name" value="TRANSALDOLASE_1"/>
    <property type="match status" value="1"/>
</dbReference>
<dbReference type="PROSITE" id="PS00958">
    <property type="entry name" value="TRANSALDOLASE_2"/>
    <property type="match status" value="1"/>
</dbReference>
<accession>A1JJD0</accession>
<gene>
    <name evidence="2" type="primary">tal</name>
    <name type="ordered locus">YE0604</name>
</gene>
<sequence>MTDKLTSLRQITTVVADTGDIAAMKLYQPQDATTNPSLILNAAQIPEYRKLIDEAIAWAREQSSDHAQQIVDATDKLAVNIGLEILKLIPGRISTEVDARLSYDTVASVAKAKRLIKLYNEAGISNDRILIKLASTWQGIRAAEQLEKEGINCNLTLLFSFAQARACAEAGVFLISPFVGRILDWYKANGDKKEFAPHEDPGVVSVTEIYQYYKKHGYKTVVMGASFRNLGEIIELAGCDRLTIAPSLLKELAESEGPVERKLAYTGEVQAKPTPLTEAEFYWQHNQDPMAIDKLADGIRKFAIDQGKLEKMISDLL</sequence>
<reference key="1">
    <citation type="journal article" date="2006" name="PLoS Genet.">
        <title>The complete genome sequence and comparative genome analysis of the high pathogenicity Yersinia enterocolitica strain 8081.</title>
        <authorList>
            <person name="Thomson N.R."/>
            <person name="Howard S."/>
            <person name="Wren B.W."/>
            <person name="Holden M.T.G."/>
            <person name="Crossman L."/>
            <person name="Challis G.L."/>
            <person name="Churcher C."/>
            <person name="Mungall K."/>
            <person name="Brooks K."/>
            <person name="Chillingworth T."/>
            <person name="Feltwell T."/>
            <person name="Abdellah Z."/>
            <person name="Hauser H."/>
            <person name="Jagels K."/>
            <person name="Maddison M."/>
            <person name="Moule S."/>
            <person name="Sanders M."/>
            <person name="Whitehead S."/>
            <person name="Quail M.A."/>
            <person name="Dougan G."/>
            <person name="Parkhill J."/>
            <person name="Prentice M.B."/>
        </authorList>
    </citation>
    <scope>NUCLEOTIDE SEQUENCE [LARGE SCALE GENOMIC DNA]</scope>
    <source>
        <strain>NCTC 13174 / 8081</strain>
    </source>
</reference>
<name>TAL_YERE8</name>
<proteinExistence type="inferred from homology"/>
<keyword id="KW-0963">Cytoplasm</keyword>
<keyword id="KW-0570">Pentose shunt</keyword>
<keyword id="KW-0704">Schiff base</keyword>
<keyword id="KW-0808">Transferase</keyword>
<evidence type="ECO:0000250" key="1"/>
<evidence type="ECO:0000255" key="2">
    <source>
        <dbReference type="HAMAP-Rule" id="MF_00492"/>
    </source>
</evidence>
<comment type="function">
    <text evidence="2">Transaldolase is important for the balance of metabolites in the pentose-phosphate pathway.</text>
</comment>
<comment type="catalytic activity">
    <reaction evidence="2">
        <text>D-sedoheptulose 7-phosphate + D-glyceraldehyde 3-phosphate = D-erythrose 4-phosphate + beta-D-fructose 6-phosphate</text>
        <dbReference type="Rhea" id="RHEA:17053"/>
        <dbReference type="ChEBI" id="CHEBI:16897"/>
        <dbReference type="ChEBI" id="CHEBI:57483"/>
        <dbReference type="ChEBI" id="CHEBI:57634"/>
        <dbReference type="ChEBI" id="CHEBI:59776"/>
        <dbReference type="EC" id="2.2.1.2"/>
    </reaction>
</comment>
<comment type="pathway">
    <text evidence="2">Carbohydrate degradation; pentose phosphate pathway; D-glyceraldehyde 3-phosphate and beta-D-fructose 6-phosphate from D-ribose 5-phosphate and D-xylulose 5-phosphate (non-oxidative stage): step 2/3.</text>
</comment>
<comment type="subunit">
    <text evidence="1">Homodimer.</text>
</comment>
<comment type="subcellular location">
    <subcellularLocation>
        <location evidence="2">Cytoplasm</location>
    </subcellularLocation>
</comment>
<comment type="similarity">
    <text evidence="2">Belongs to the transaldolase family. Type 1 subfamily.</text>
</comment>
<organism>
    <name type="scientific">Yersinia enterocolitica serotype O:8 / biotype 1B (strain NCTC 13174 / 8081)</name>
    <dbReference type="NCBI Taxonomy" id="393305"/>
    <lineage>
        <taxon>Bacteria</taxon>
        <taxon>Pseudomonadati</taxon>
        <taxon>Pseudomonadota</taxon>
        <taxon>Gammaproteobacteria</taxon>
        <taxon>Enterobacterales</taxon>
        <taxon>Yersiniaceae</taxon>
        <taxon>Yersinia</taxon>
    </lineage>
</organism>